<feature type="chain" id="PRO_0000421287" description="Trehalose/maltose transport system permease protein MalG">
    <location>
        <begin position="1"/>
        <end position="278"/>
    </location>
</feature>
<feature type="transmembrane region" description="Helical" evidence="1">
    <location>
        <begin position="12"/>
        <end position="32"/>
    </location>
</feature>
<feature type="transmembrane region" description="Helical" evidence="1">
    <location>
        <begin position="74"/>
        <end position="94"/>
    </location>
</feature>
<feature type="transmembrane region" description="Helical" evidence="1">
    <location>
        <begin position="106"/>
        <end position="126"/>
    </location>
</feature>
<feature type="transmembrane region" description="Helical" evidence="1">
    <location>
        <begin position="141"/>
        <end position="161"/>
    </location>
</feature>
<feature type="transmembrane region" description="Helical" evidence="1">
    <location>
        <begin position="186"/>
        <end position="206"/>
    </location>
</feature>
<feature type="transmembrane region" description="Helical" evidence="1">
    <location>
        <begin position="242"/>
        <end position="262"/>
    </location>
</feature>
<feature type="domain" description="ABC transmembrane type-1" evidence="1">
    <location>
        <begin position="70"/>
        <end position="262"/>
    </location>
</feature>
<sequence length="278" mass="30795">MREEVLKRILLIIGAILMAIICLFPFIWMIVVSFAEDPTFLGSPLVEYKSTLENYVRVLSDPTLHFPAYLKNSIIIASLVTLTTVSISSLAAYAVSRIEFKGRLLIPIFVLGLSMFPQISLVGYLFKFIEKLGWVNTYQALYFPYVAWTLPLSLWILLSYFSQLPKDLDEAAMIDGASRIKTLTTIILPLSAPALFSTALLVFIAAFNEFMFALLFTTDHRARTVPVGIALFQGVHGEIPWGSVMAASVISTIPLVIMALLFQKYIVSGLTAGALKGE</sequence>
<accession>Q7LYX6</accession>
<accession>H3ZP65</accession>
<dbReference type="EMBL" id="AF012836">
    <property type="protein sequence ID" value="AAC38138.1"/>
    <property type="molecule type" value="Genomic_DNA"/>
</dbReference>
<dbReference type="EMBL" id="AF307053">
    <property type="protein sequence ID" value="AAG45390.1"/>
    <property type="molecule type" value="Genomic_DNA"/>
</dbReference>
<dbReference type="EMBL" id="CP006670">
    <property type="protein sequence ID" value="EHR78232.1"/>
    <property type="molecule type" value="Genomic_DNA"/>
</dbReference>
<dbReference type="RefSeq" id="WP_004068721.1">
    <property type="nucleotide sequence ID" value="NC_022084.1"/>
</dbReference>
<dbReference type="SMR" id="Q7LYX6"/>
<dbReference type="STRING" id="523849.OCC_03552"/>
<dbReference type="PaxDb" id="523849-OCC_03552"/>
<dbReference type="GeneID" id="16548947"/>
<dbReference type="KEGG" id="tlt:OCC_03552"/>
<dbReference type="HOGENOM" id="CLU_016047_1_2_2"/>
<dbReference type="OrthoDB" id="97781at2157"/>
<dbReference type="Proteomes" id="UP000015502">
    <property type="component" value="Chromosome"/>
</dbReference>
<dbReference type="GO" id="GO:0043190">
    <property type="term" value="C:ATP-binding cassette (ABC) transporter complex"/>
    <property type="evidence" value="ECO:0000314"/>
    <property type="project" value="UniProtKB"/>
</dbReference>
<dbReference type="GO" id="GO:0055085">
    <property type="term" value="P:transmembrane transport"/>
    <property type="evidence" value="ECO:0007669"/>
    <property type="project" value="InterPro"/>
</dbReference>
<dbReference type="CDD" id="cd06261">
    <property type="entry name" value="TM_PBP2"/>
    <property type="match status" value="1"/>
</dbReference>
<dbReference type="Gene3D" id="1.10.3720.10">
    <property type="entry name" value="MetI-like"/>
    <property type="match status" value="1"/>
</dbReference>
<dbReference type="InterPro" id="IPR050901">
    <property type="entry name" value="BP-dep_ABC_trans_perm"/>
</dbReference>
<dbReference type="InterPro" id="IPR000515">
    <property type="entry name" value="MetI-like"/>
</dbReference>
<dbReference type="InterPro" id="IPR035906">
    <property type="entry name" value="MetI-like_sf"/>
</dbReference>
<dbReference type="PANTHER" id="PTHR32243:SF18">
    <property type="entry name" value="INNER MEMBRANE ABC TRANSPORTER PERMEASE PROTEIN YCJP"/>
    <property type="match status" value="1"/>
</dbReference>
<dbReference type="PANTHER" id="PTHR32243">
    <property type="entry name" value="MALTOSE TRANSPORT SYSTEM PERMEASE-RELATED"/>
    <property type="match status" value="1"/>
</dbReference>
<dbReference type="Pfam" id="PF00528">
    <property type="entry name" value="BPD_transp_1"/>
    <property type="match status" value="1"/>
</dbReference>
<dbReference type="SUPFAM" id="SSF161098">
    <property type="entry name" value="MetI-like"/>
    <property type="match status" value="1"/>
</dbReference>
<dbReference type="PROSITE" id="PS50928">
    <property type="entry name" value="ABC_TM1"/>
    <property type="match status" value="1"/>
</dbReference>
<name>MALG_THELN</name>
<comment type="function">
    <text evidence="2 4">Part of the ABC transporter complex MalEFGK involved in trehalose/maltose import. Responsible for the translocation of the substrate across the membrane.</text>
</comment>
<comment type="subunit">
    <text evidence="2 3">The complex is composed of two ATP-binding proteins (MalK), two transmembrane proteins (MalG and MalF) and a solute-binding protein (MalE).</text>
</comment>
<comment type="subcellular location">
    <subcellularLocation>
        <location evidence="2">Cell membrane</location>
        <topology evidence="1 2">Multi-pass membrane protein</topology>
    </subcellularLocation>
</comment>
<comment type="similarity">
    <text evidence="5">Belongs to the binding-protein-dependent transport system permease family.</text>
</comment>
<reference key="1">
    <citation type="journal article" date="1998" name="J. Bacteriol.">
        <title>Archaeal binding protein-dependent ABC transporter: molecular and biochemical analysis of the trehalose/maltose transport system of the hyperthermophilic archaeon Thermococcus litoralis.</title>
        <authorList>
            <person name="Horlacher R."/>
            <person name="Xavier K.B."/>
            <person name="Santos H."/>
            <person name="DiRuggiero J."/>
            <person name="Kossmann M."/>
            <person name="Boos W."/>
        </authorList>
    </citation>
    <scope>NUCLEOTIDE SEQUENCE [GENOMIC DNA]</scope>
    <source>
        <strain>ATCC 51850 / DSM 5473 / JCM 8560 / NS-C</strain>
    </source>
</reference>
<reference key="2">
    <citation type="journal article" date="2000" name="Mol. Microbiol.">
        <title>Evidence of recent lateral gene transfer among hyperthermophilic archaea.</title>
        <authorList>
            <person name="Diruggiero J."/>
            <person name="Dunn D."/>
            <person name="Maeder D.L."/>
            <person name="Holley-Shanks R."/>
            <person name="Chatard J."/>
            <person name="Horlacher R."/>
            <person name="Robb F.T."/>
            <person name="Boos W."/>
            <person name="Weiss R.B."/>
        </authorList>
    </citation>
    <scope>NUCLEOTIDE SEQUENCE [GENOMIC DNA]</scope>
    <source>
        <strain>ATCC 51850 / DSM 5473 / JCM 8560 / NS-C</strain>
    </source>
</reference>
<reference key="3">
    <citation type="journal article" date="2012" name="J. Bacteriol.">
        <title>Genome sequence of the model hyperthermophilic archaeon Thermococcus litoralis NS-C.</title>
        <authorList>
            <person name="Gardner A.F."/>
            <person name="Kumar S."/>
            <person name="Perler F.B."/>
        </authorList>
    </citation>
    <scope>NUCLEOTIDE SEQUENCE [LARGE SCALE GENOMIC DNA]</scope>
    <source>
        <strain>ATCC 51850 / DSM 5473 / JCM 8560 / NS-C</strain>
    </source>
</reference>
<reference key="4">
    <citation type="journal article" date="1996" name="J. Bacteriol.">
        <title>High-affinity maltose/trehalose transport system in the hyperthermophilic archaeon Thermococcus litoralis.</title>
        <authorList>
            <person name="Xavier K.B."/>
            <person name="Martins L.O."/>
            <person name="Peist R."/>
            <person name="Kossmann M."/>
            <person name="Boos W."/>
            <person name="Santos H."/>
        </authorList>
    </citation>
    <scope>FUNCTION</scope>
    <source>
        <strain>ATCC 51850 / DSM 5473 / JCM 8560 / NS-C</strain>
    </source>
</reference>
<reference key="5">
    <citation type="journal article" date="2001" name="Eur. J. Biochem.">
        <title>Purification and characterization of the heterologously expressed trehalose/maltose ABC transporter complex of the hyperthermophilic archaeon Thermococcus litoralis.</title>
        <authorList>
            <person name="Greller G."/>
            <person name="Riek R."/>
            <person name="Boos W."/>
        </authorList>
    </citation>
    <scope>FUNCTION</scope>
    <scope>SUBUNIT</scope>
    <scope>SUBCELLULAR LOCATION</scope>
</reference>
<reference key="6">
    <citation type="journal article" date="2002" name="Acta Crystallogr. D">
        <title>Crystallization and preliminary X-ray analysis of the trehalose/maltose ABC transporter MalFGK2 from Thermococcus litoralis.</title>
        <authorList>
            <person name="Schiefner A."/>
            <person name="Diederichs K."/>
            <person name="Hashimoto K."/>
            <person name="Boos W."/>
            <person name="Welte W."/>
        </authorList>
    </citation>
    <scope>CRYSTALLIZATION</scope>
    <scope>SUBUNIT</scope>
</reference>
<keyword id="KW-1003">Cell membrane</keyword>
<keyword id="KW-0472">Membrane</keyword>
<keyword id="KW-0762">Sugar transport</keyword>
<keyword id="KW-0812">Transmembrane</keyword>
<keyword id="KW-1133">Transmembrane helix</keyword>
<keyword id="KW-0813">Transport</keyword>
<organism>
    <name type="scientific">Thermococcus litoralis (strain ATCC 51850 / DSM 5473 / JCM 8560 / NS-C)</name>
    <dbReference type="NCBI Taxonomy" id="523849"/>
    <lineage>
        <taxon>Archaea</taxon>
        <taxon>Methanobacteriati</taxon>
        <taxon>Methanobacteriota</taxon>
        <taxon>Thermococci</taxon>
        <taxon>Thermococcales</taxon>
        <taxon>Thermococcaceae</taxon>
        <taxon>Thermococcus</taxon>
    </lineage>
</organism>
<evidence type="ECO:0000255" key="1">
    <source>
        <dbReference type="PROSITE-ProRule" id="PRU00441"/>
    </source>
</evidence>
<evidence type="ECO:0000269" key="2">
    <source>
    </source>
</evidence>
<evidence type="ECO:0000269" key="3">
    <source>
    </source>
</evidence>
<evidence type="ECO:0000269" key="4">
    <source>
    </source>
</evidence>
<evidence type="ECO:0000305" key="5"/>
<protein>
    <recommendedName>
        <fullName>Trehalose/maltose transport system permease protein MalG</fullName>
    </recommendedName>
</protein>
<gene>
    <name type="primary">malG</name>
    <name type="ORF">OCC_03552</name>
</gene>
<proteinExistence type="evidence at protein level"/>